<evidence type="ECO:0000255" key="1">
    <source>
        <dbReference type="HAMAP-Rule" id="MF_01007"/>
    </source>
</evidence>
<evidence type="ECO:0000305" key="2"/>
<gene>
    <name evidence="1" type="primary">rsmH</name>
    <name type="synonym">mraW</name>
    <name type="ordered locus">SAOUHSC_01143</name>
</gene>
<protein>
    <recommendedName>
        <fullName evidence="1">Ribosomal RNA small subunit methyltransferase H</fullName>
        <ecNumber evidence="1">2.1.1.199</ecNumber>
    </recommendedName>
    <alternativeName>
        <fullName evidence="1">16S rRNA m(4)C1402 methyltransferase</fullName>
    </alternativeName>
    <alternativeName>
        <fullName evidence="1">rRNA (cytosine-N(4)-)-methyltransferase RsmH</fullName>
    </alternativeName>
</protein>
<proteinExistence type="inferred from homology"/>
<dbReference type="EC" id="2.1.1.199" evidence="1"/>
<dbReference type="EMBL" id="U94706">
    <property type="protein sequence ID" value="AAC45622.1"/>
    <property type="molecule type" value="Genomic_DNA"/>
</dbReference>
<dbReference type="EMBL" id="CP000253">
    <property type="protein sequence ID" value="ABD30253.1"/>
    <property type="status" value="ALT_INIT"/>
    <property type="molecule type" value="Genomic_DNA"/>
</dbReference>
<dbReference type="EMBL" id="AB007500">
    <property type="protein sequence ID" value="BAA22552.1"/>
    <property type="molecule type" value="Genomic_DNA"/>
</dbReference>
<dbReference type="RefSeq" id="WP_000468384.1">
    <property type="nucleotide sequence ID" value="NZ_LS483365.1"/>
</dbReference>
<dbReference type="RefSeq" id="YP_499685.1">
    <property type="nucleotide sequence ID" value="NC_007795.1"/>
</dbReference>
<dbReference type="SMR" id="P60393"/>
<dbReference type="STRING" id="93061.SAOUHSC_01143"/>
<dbReference type="PaxDb" id="1280-SAXN108_1177"/>
<dbReference type="GeneID" id="3920703"/>
<dbReference type="KEGG" id="sao:SAOUHSC_01143"/>
<dbReference type="PATRIC" id="fig|93061.5.peg.1048"/>
<dbReference type="eggNOG" id="COG0275">
    <property type="taxonomic scope" value="Bacteria"/>
</dbReference>
<dbReference type="HOGENOM" id="CLU_038422_2_0_9"/>
<dbReference type="OrthoDB" id="9806637at2"/>
<dbReference type="PRO" id="PR:P60393"/>
<dbReference type="Proteomes" id="UP000008816">
    <property type="component" value="Chromosome"/>
</dbReference>
<dbReference type="GO" id="GO:0005737">
    <property type="term" value="C:cytoplasm"/>
    <property type="evidence" value="ECO:0000318"/>
    <property type="project" value="GO_Central"/>
</dbReference>
<dbReference type="GO" id="GO:0071424">
    <property type="term" value="F:rRNA (cytosine-N4-)-methyltransferase activity"/>
    <property type="evidence" value="ECO:0000318"/>
    <property type="project" value="GO_Central"/>
</dbReference>
<dbReference type="GO" id="GO:0070475">
    <property type="term" value="P:rRNA base methylation"/>
    <property type="evidence" value="ECO:0000318"/>
    <property type="project" value="GO_Central"/>
</dbReference>
<dbReference type="FunFam" id="1.10.150.170:FF:000001">
    <property type="entry name" value="Ribosomal RNA small subunit methyltransferase H"/>
    <property type="match status" value="1"/>
</dbReference>
<dbReference type="Gene3D" id="1.10.150.170">
    <property type="entry name" value="Putative methyltransferase TM0872, insert domain"/>
    <property type="match status" value="1"/>
</dbReference>
<dbReference type="Gene3D" id="3.40.50.150">
    <property type="entry name" value="Vaccinia Virus protein VP39"/>
    <property type="match status" value="1"/>
</dbReference>
<dbReference type="HAMAP" id="MF_01007">
    <property type="entry name" value="16SrRNA_methyltr_H"/>
    <property type="match status" value="1"/>
</dbReference>
<dbReference type="InterPro" id="IPR002903">
    <property type="entry name" value="RsmH"/>
</dbReference>
<dbReference type="InterPro" id="IPR023397">
    <property type="entry name" value="SAM-dep_MeTrfase_MraW_recog"/>
</dbReference>
<dbReference type="InterPro" id="IPR029063">
    <property type="entry name" value="SAM-dependent_MTases_sf"/>
</dbReference>
<dbReference type="NCBIfam" id="TIGR00006">
    <property type="entry name" value="16S rRNA (cytosine(1402)-N(4))-methyltransferase RsmH"/>
    <property type="match status" value="1"/>
</dbReference>
<dbReference type="PANTHER" id="PTHR11265:SF0">
    <property type="entry name" value="12S RRNA N4-METHYLCYTIDINE METHYLTRANSFERASE"/>
    <property type="match status" value="1"/>
</dbReference>
<dbReference type="PANTHER" id="PTHR11265">
    <property type="entry name" value="S-ADENOSYL-METHYLTRANSFERASE MRAW"/>
    <property type="match status" value="1"/>
</dbReference>
<dbReference type="Pfam" id="PF01795">
    <property type="entry name" value="Methyltransf_5"/>
    <property type="match status" value="1"/>
</dbReference>
<dbReference type="PIRSF" id="PIRSF004486">
    <property type="entry name" value="MraW"/>
    <property type="match status" value="1"/>
</dbReference>
<dbReference type="SUPFAM" id="SSF81799">
    <property type="entry name" value="Putative methyltransferase TM0872, insert domain"/>
    <property type="match status" value="1"/>
</dbReference>
<dbReference type="SUPFAM" id="SSF53335">
    <property type="entry name" value="S-adenosyl-L-methionine-dependent methyltransferases"/>
    <property type="match status" value="1"/>
</dbReference>
<keyword id="KW-0963">Cytoplasm</keyword>
<keyword id="KW-0489">Methyltransferase</keyword>
<keyword id="KW-1185">Reference proteome</keyword>
<keyword id="KW-0698">rRNA processing</keyword>
<keyword id="KW-0949">S-adenosyl-L-methionine</keyword>
<keyword id="KW-0808">Transferase</keyword>
<reference key="1">
    <citation type="journal article" date="1997" name="J. Bacteriol.">
        <title>Identification and characterization of cell wall-cell division gene clusters in pathogenic Gram-positive cocci.</title>
        <authorList>
            <person name="Pucci M.J."/>
            <person name="Thanassi J.A."/>
            <person name="Discotto L.F."/>
            <person name="Kessler R.E."/>
            <person name="Dougherty T.J."/>
        </authorList>
    </citation>
    <scope>NUCLEOTIDE SEQUENCE [GENOMIC DNA]</scope>
</reference>
<reference key="2">
    <citation type="book" date="2006" name="Gram positive pathogens, 2nd edition">
        <title>The Staphylococcus aureus NCTC 8325 genome.</title>
        <editorList>
            <person name="Fischetti V."/>
            <person name="Novick R."/>
            <person name="Ferretti J."/>
            <person name="Portnoy D."/>
            <person name="Rood J."/>
        </editorList>
        <authorList>
            <person name="Gillaspy A.F."/>
            <person name="Worrell V."/>
            <person name="Orvis J."/>
            <person name="Roe B.A."/>
            <person name="Dyer D.W."/>
            <person name="Iandolo J.J."/>
        </authorList>
    </citation>
    <scope>NUCLEOTIDE SEQUENCE [LARGE SCALE GENOMIC DNA]</scope>
    <source>
        <strain>NCTC 8325 / PS 47</strain>
    </source>
</reference>
<reference key="3">
    <citation type="journal article" date="1998" name="J. Bacteriol.">
        <title>Penicillin-binding protein 1 of Staphylococcus aureus is essential for growth.</title>
        <authorList>
            <person name="Wada A."/>
            <person name="Watanabe H."/>
        </authorList>
    </citation>
    <scope>NUCLEOTIDE SEQUENCE [GENOMIC DNA] OF 247-311</scope>
</reference>
<organism>
    <name type="scientific">Staphylococcus aureus (strain NCTC 8325 / PS 47)</name>
    <dbReference type="NCBI Taxonomy" id="93061"/>
    <lineage>
        <taxon>Bacteria</taxon>
        <taxon>Bacillati</taxon>
        <taxon>Bacillota</taxon>
        <taxon>Bacilli</taxon>
        <taxon>Bacillales</taxon>
        <taxon>Staphylococcaceae</taxon>
        <taxon>Staphylococcus</taxon>
    </lineage>
</organism>
<accession>P60393</accession>
<accession>O07320</accession>
<accession>Q2FZ96</accession>
<name>RSMH_STAA8</name>
<feature type="chain" id="PRO_0000108710" description="Ribosomal RNA small subunit methyltransferase H">
    <location>
        <begin position="1"/>
        <end position="311"/>
    </location>
</feature>
<feature type="binding site" evidence="1">
    <location>
        <begin position="32"/>
        <end position="34"/>
    </location>
    <ligand>
        <name>S-adenosyl-L-methionine</name>
        <dbReference type="ChEBI" id="CHEBI:59789"/>
    </ligand>
</feature>
<feature type="binding site" evidence="1">
    <location>
        <position position="52"/>
    </location>
    <ligand>
        <name>S-adenosyl-L-methionine</name>
        <dbReference type="ChEBI" id="CHEBI:59789"/>
    </ligand>
</feature>
<feature type="binding site" evidence="1">
    <location>
        <position position="79"/>
    </location>
    <ligand>
        <name>S-adenosyl-L-methionine</name>
        <dbReference type="ChEBI" id="CHEBI:59789"/>
    </ligand>
</feature>
<feature type="binding site" evidence="1">
    <location>
        <position position="100"/>
    </location>
    <ligand>
        <name>S-adenosyl-L-methionine</name>
        <dbReference type="ChEBI" id="CHEBI:59789"/>
    </ligand>
</feature>
<feature type="binding site" evidence="1">
    <location>
        <position position="107"/>
    </location>
    <ligand>
        <name>S-adenosyl-L-methionine</name>
        <dbReference type="ChEBI" id="CHEBI:59789"/>
    </ligand>
</feature>
<sequence>MFHHISVMLNETIDYLNVKENGVYIDCTLGGAGHALYLLNQLNDDGRLIAIDQDQTAIDNAKEVLKDHLHKVTFVHSNFRELTQILKDLNIEKVDGIYYDLGVSSPQLDIPERGFSYHHDATLDMRMDQTQELTAYEIVNNWSYEALVKIFYRYGEEKFSKQIARRIEAHREQQPITTTLELVDIIKEGIPAKARRKGGHPAKRVFQALRIAVNDELSAFEDSIEQAIELVKVDGRISVITFHSLEDRLCKQVFQEYEKGPEVPRGLPVIPEAYTPKLKRVNRKPITATEEDLDDNNRARSAKLRVAEILK</sequence>
<comment type="function">
    <text evidence="1">Specifically methylates the N4 position of cytidine in position 1402 (C1402) of 16S rRNA.</text>
</comment>
<comment type="catalytic activity">
    <reaction evidence="1">
        <text>cytidine(1402) in 16S rRNA + S-adenosyl-L-methionine = N(4)-methylcytidine(1402) in 16S rRNA + S-adenosyl-L-homocysteine + H(+)</text>
        <dbReference type="Rhea" id="RHEA:42928"/>
        <dbReference type="Rhea" id="RHEA-COMP:10286"/>
        <dbReference type="Rhea" id="RHEA-COMP:10287"/>
        <dbReference type="ChEBI" id="CHEBI:15378"/>
        <dbReference type="ChEBI" id="CHEBI:57856"/>
        <dbReference type="ChEBI" id="CHEBI:59789"/>
        <dbReference type="ChEBI" id="CHEBI:74506"/>
        <dbReference type="ChEBI" id="CHEBI:82748"/>
        <dbReference type="EC" id="2.1.1.199"/>
    </reaction>
</comment>
<comment type="subcellular location">
    <subcellularLocation>
        <location evidence="1">Cytoplasm</location>
    </subcellularLocation>
</comment>
<comment type="similarity">
    <text evidence="1">Belongs to the methyltransferase superfamily. RsmH family.</text>
</comment>
<comment type="sequence caution" evidence="2">
    <conflict type="erroneous initiation">
        <sequence resource="EMBL-CDS" id="ABD30253"/>
    </conflict>
</comment>